<evidence type="ECO:0000255" key="1">
    <source>
        <dbReference type="HAMAP-Rule" id="MF_00815"/>
    </source>
</evidence>
<name>ATPG_HAEIN</name>
<gene>
    <name evidence="1" type="primary">atpG</name>
    <name type="ordered locus">HI_0480</name>
</gene>
<organism>
    <name type="scientific">Haemophilus influenzae (strain ATCC 51907 / DSM 11121 / KW20 / Rd)</name>
    <dbReference type="NCBI Taxonomy" id="71421"/>
    <lineage>
        <taxon>Bacteria</taxon>
        <taxon>Pseudomonadati</taxon>
        <taxon>Pseudomonadota</taxon>
        <taxon>Gammaproteobacteria</taxon>
        <taxon>Pasteurellales</taxon>
        <taxon>Pasteurellaceae</taxon>
        <taxon>Haemophilus</taxon>
    </lineage>
</organism>
<feature type="chain" id="PRO_0000073292" description="ATP synthase gamma chain">
    <location>
        <begin position="1"/>
        <end position="289"/>
    </location>
</feature>
<accession>P43716</accession>
<dbReference type="EMBL" id="L42023">
    <property type="protein sequence ID" value="AAC22138.1"/>
    <property type="molecule type" value="Genomic_DNA"/>
</dbReference>
<dbReference type="PIR" id="E64071">
    <property type="entry name" value="E64071"/>
</dbReference>
<dbReference type="RefSeq" id="NP_438640.1">
    <property type="nucleotide sequence ID" value="NC_000907.1"/>
</dbReference>
<dbReference type="SMR" id="P43716"/>
<dbReference type="STRING" id="71421.HI_0480"/>
<dbReference type="EnsemblBacteria" id="AAC22138">
    <property type="protein sequence ID" value="AAC22138"/>
    <property type="gene ID" value="HI_0480"/>
</dbReference>
<dbReference type="KEGG" id="hin:HI_0480"/>
<dbReference type="PATRIC" id="fig|71421.8.peg.499"/>
<dbReference type="eggNOG" id="COG0224">
    <property type="taxonomic scope" value="Bacteria"/>
</dbReference>
<dbReference type="HOGENOM" id="CLU_050669_0_1_6"/>
<dbReference type="OrthoDB" id="9812769at2"/>
<dbReference type="PhylomeDB" id="P43716"/>
<dbReference type="BioCyc" id="HINF71421:G1GJ1-495-MONOMER"/>
<dbReference type="Proteomes" id="UP000000579">
    <property type="component" value="Chromosome"/>
</dbReference>
<dbReference type="GO" id="GO:0005886">
    <property type="term" value="C:plasma membrane"/>
    <property type="evidence" value="ECO:0007669"/>
    <property type="project" value="UniProtKB-SubCell"/>
</dbReference>
<dbReference type="GO" id="GO:0045259">
    <property type="term" value="C:proton-transporting ATP synthase complex"/>
    <property type="evidence" value="ECO:0007669"/>
    <property type="project" value="UniProtKB-KW"/>
</dbReference>
<dbReference type="GO" id="GO:0005524">
    <property type="term" value="F:ATP binding"/>
    <property type="evidence" value="ECO:0007669"/>
    <property type="project" value="UniProtKB-UniRule"/>
</dbReference>
<dbReference type="GO" id="GO:0046933">
    <property type="term" value="F:proton-transporting ATP synthase activity, rotational mechanism"/>
    <property type="evidence" value="ECO:0007669"/>
    <property type="project" value="UniProtKB-UniRule"/>
</dbReference>
<dbReference type="GO" id="GO:0015986">
    <property type="term" value="P:proton motive force-driven ATP synthesis"/>
    <property type="evidence" value="ECO:0000318"/>
    <property type="project" value="GO_Central"/>
</dbReference>
<dbReference type="GO" id="GO:0042777">
    <property type="term" value="P:proton motive force-driven plasma membrane ATP synthesis"/>
    <property type="evidence" value="ECO:0007669"/>
    <property type="project" value="UniProtKB-UniRule"/>
</dbReference>
<dbReference type="CDD" id="cd12151">
    <property type="entry name" value="F1-ATPase_gamma"/>
    <property type="match status" value="1"/>
</dbReference>
<dbReference type="FunFam" id="1.10.287.80:FF:000005">
    <property type="entry name" value="ATP synthase gamma chain"/>
    <property type="match status" value="1"/>
</dbReference>
<dbReference type="FunFam" id="3.40.1380.10:FF:000001">
    <property type="entry name" value="ATP synthase gamma chain"/>
    <property type="match status" value="1"/>
</dbReference>
<dbReference type="Gene3D" id="3.40.1380.10">
    <property type="match status" value="1"/>
</dbReference>
<dbReference type="Gene3D" id="1.10.287.80">
    <property type="entry name" value="ATP synthase, gamma subunit, helix hairpin domain"/>
    <property type="match status" value="1"/>
</dbReference>
<dbReference type="HAMAP" id="MF_00815">
    <property type="entry name" value="ATP_synth_gamma_bact"/>
    <property type="match status" value="1"/>
</dbReference>
<dbReference type="InterPro" id="IPR035968">
    <property type="entry name" value="ATP_synth_F1_ATPase_gsu"/>
</dbReference>
<dbReference type="InterPro" id="IPR000131">
    <property type="entry name" value="ATP_synth_F1_gsu"/>
</dbReference>
<dbReference type="InterPro" id="IPR023632">
    <property type="entry name" value="ATP_synth_F1_gsu_CS"/>
</dbReference>
<dbReference type="NCBIfam" id="TIGR01146">
    <property type="entry name" value="ATPsyn_F1gamma"/>
    <property type="match status" value="1"/>
</dbReference>
<dbReference type="NCBIfam" id="NF004144">
    <property type="entry name" value="PRK05621.1-1"/>
    <property type="match status" value="1"/>
</dbReference>
<dbReference type="PANTHER" id="PTHR11693">
    <property type="entry name" value="ATP SYNTHASE GAMMA CHAIN"/>
    <property type="match status" value="1"/>
</dbReference>
<dbReference type="PANTHER" id="PTHR11693:SF22">
    <property type="entry name" value="ATP SYNTHASE SUBUNIT GAMMA, MITOCHONDRIAL"/>
    <property type="match status" value="1"/>
</dbReference>
<dbReference type="Pfam" id="PF00231">
    <property type="entry name" value="ATP-synt"/>
    <property type="match status" value="1"/>
</dbReference>
<dbReference type="PRINTS" id="PR00126">
    <property type="entry name" value="ATPASEGAMMA"/>
</dbReference>
<dbReference type="SUPFAM" id="SSF52943">
    <property type="entry name" value="ATP synthase (F1-ATPase), gamma subunit"/>
    <property type="match status" value="1"/>
</dbReference>
<dbReference type="PROSITE" id="PS00153">
    <property type="entry name" value="ATPASE_GAMMA"/>
    <property type="match status" value="1"/>
</dbReference>
<proteinExistence type="inferred from homology"/>
<sequence length="289" mass="32069">MAGAKEIKTKIASVQSTQKITKAMEMVATSKMRKTQDRMAASRPYSETIRNVISHVSKASIGYKHPFLVEREVKKIGILVISTDRGMCGGLNVNLFKTTLNQIKNWKEQNISTDLGLIGSKGISFFRSFGFNIKGQLSGLGDTPALEELIGVANTMFDAYRNGEIDAVYIAYNKFVNTMSQKPVVQQLVPLPESKDDHLNERQQTWDYLYEPEPKVLLDSLLVRYLESQIYQAVVDNVASEQAARMVAMKAATDNAGNLINDLRLVYNKARQASITNELNEIVAGAAAI</sequence>
<reference key="1">
    <citation type="journal article" date="1995" name="Science">
        <title>Whole-genome random sequencing and assembly of Haemophilus influenzae Rd.</title>
        <authorList>
            <person name="Fleischmann R.D."/>
            <person name="Adams M.D."/>
            <person name="White O."/>
            <person name="Clayton R.A."/>
            <person name="Kirkness E.F."/>
            <person name="Kerlavage A.R."/>
            <person name="Bult C.J."/>
            <person name="Tomb J.-F."/>
            <person name="Dougherty B.A."/>
            <person name="Merrick J.M."/>
            <person name="McKenney K."/>
            <person name="Sutton G.G."/>
            <person name="FitzHugh W."/>
            <person name="Fields C.A."/>
            <person name="Gocayne J.D."/>
            <person name="Scott J.D."/>
            <person name="Shirley R."/>
            <person name="Liu L.-I."/>
            <person name="Glodek A."/>
            <person name="Kelley J.M."/>
            <person name="Weidman J.F."/>
            <person name="Phillips C.A."/>
            <person name="Spriggs T."/>
            <person name="Hedblom E."/>
            <person name="Cotton M.D."/>
            <person name="Utterback T.R."/>
            <person name="Hanna M.C."/>
            <person name="Nguyen D.T."/>
            <person name="Saudek D.M."/>
            <person name="Brandon R.C."/>
            <person name="Fine L.D."/>
            <person name="Fritchman J.L."/>
            <person name="Fuhrmann J.L."/>
            <person name="Geoghagen N.S.M."/>
            <person name="Gnehm C.L."/>
            <person name="McDonald L.A."/>
            <person name="Small K.V."/>
            <person name="Fraser C.M."/>
            <person name="Smith H.O."/>
            <person name="Venter J.C."/>
        </authorList>
    </citation>
    <scope>NUCLEOTIDE SEQUENCE [LARGE SCALE GENOMIC DNA]</scope>
    <source>
        <strain>ATCC 51907 / DSM 11121 / KW20 / Rd</strain>
    </source>
</reference>
<comment type="function">
    <text evidence="1">Produces ATP from ADP in the presence of a proton gradient across the membrane. The gamma chain is believed to be important in regulating ATPase activity and the flow of protons through the CF(0) complex.</text>
</comment>
<comment type="subunit">
    <text evidence="1">F-type ATPases have 2 components, CF(1) - the catalytic core - and CF(0) - the membrane proton channel. CF(1) has five subunits: alpha(3), beta(3), gamma(1), delta(1), epsilon(1). CF(0) has three main subunits: a, b and c.</text>
</comment>
<comment type="subcellular location">
    <subcellularLocation>
        <location evidence="1">Cell inner membrane</location>
        <topology evidence="1">Peripheral membrane protein</topology>
    </subcellularLocation>
</comment>
<comment type="similarity">
    <text evidence="1">Belongs to the ATPase gamma chain family.</text>
</comment>
<keyword id="KW-0066">ATP synthesis</keyword>
<keyword id="KW-0997">Cell inner membrane</keyword>
<keyword id="KW-1003">Cell membrane</keyword>
<keyword id="KW-0139">CF(1)</keyword>
<keyword id="KW-0375">Hydrogen ion transport</keyword>
<keyword id="KW-0406">Ion transport</keyword>
<keyword id="KW-0472">Membrane</keyword>
<keyword id="KW-1185">Reference proteome</keyword>
<keyword id="KW-0813">Transport</keyword>
<protein>
    <recommendedName>
        <fullName evidence="1">ATP synthase gamma chain</fullName>
    </recommendedName>
    <alternativeName>
        <fullName evidence="1">ATP synthase F1 sector gamma subunit</fullName>
    </alternativeName>
    <alternativeName>
        <fullName evidence="1">F-ATPase gamma subunit</fullName>
    </alternativeName>
</protein>